<sequence length="112" mass="12680">MNALTEMKCEACQADAPKVTDAELAELVGMIPDWGVEIRDGIMQLERVYKFKNFKLAMAFTNKLADLAEAEFHHPGILTEWGKVTVTWWSHSIKGLHKNDFIMAAKTDQLLD</sequence>
<feature type="chain" id="PRO_1000050456" description="Putative pterin-4-alpha-carbinolamine dehydratase">
    <location>
        <begin position="1"/>
        <end position="112"/>
    </location>
</feature>
<comment type="catalytic activity">
    <reaction evidence="1">
        <text>(4aS,6R)-4a-hydroxy-L-erythro-5,6,7,8-tetrahydrobiopterin = (6R)-L-erythro-6,7-dihydrobiopterin + H2O</text>
        <dbReference type="Rhea" id="RHEA:11920"/>
        <dbReference type="ChEBI" id="CHEBI:15377"/>
        <dbReference type="ChEBI" id="CHEBI:15642"/>
        <dbReference type="ChEBI" id="CHEBI:43120"/>
        <dbReference type="EC" id="4.2.1.96"/>
    </reaction>
</comment>
<comment type="similarity">
    <text evidence="1">Belongs to the pterin-4-alpha-carbinolamine dehydratase family.</text>
</comment>
<evidence type="ECO:0000255" key="1">
    <source>
        <dbReference type="HAMAP-Rule" id="MF_00434"/>
    </source>
</evidence>
<organism>
    <name type="scientific">Shewanella frigidimarina (strain NCIMB 400)</name>
    <dbReference type="NCBI Taxonomy" id="318167"/>
    <lineage>
        <taxon>Bacteria</taxon>
        <taxon>Pseudomonadati</taxon>
        <taxon>Pseudomonadota</taxon>
        <taxon>Gammaproteobacteria</taxon>
        <taxon>Alteromonadales</taxon>
        <taxon>Shewanellaceae</taxon>
        <taxon>Shewanella</taxon>
    </lineage>
</organism>
<name>PHS_SHEFN</name>
<gene>
    <name type="ordered locus">Sfri_1329</name>
</gene>
<accession>Q084Y3</accession>
<proteinExistence type="inferred from homology"/>
<reference key="1">
    <citation type="submission" date="2006-08" db="EMBL/GenBank/DDBJ databases">
        <title>Complete sequence of Shewanella frigidimarina NCIMB 400.</title>
        <authorList>
            <consortium name="US DOE Joint Genome Institute"/>
            <person name="Copeland A."/>
            <person name="Lucas S."/>
            <person name="Lapidus A."/>
            <person name="Barry K."/>
            <person name="Detter J.C."/>
            <person name="Glavina del Rio T."/>
            <person name="Hammon N."/>
            <person name="Israni S."/>
            <person name="Dalin E."/>
            <person name="Tice H."/>
            <person name="Pitluck S."/>
            <person name="Fredrickson J.K."/>
            <person name="Kolker E."/>
            <person name="McCuel L.A."/>
            <person name="DiChristina T."/>
            <person name="Nealson K.H."/>
            <person name="Newman D."/>
            <person name="Tiedje J.M."/>
            <person name="Zhou J."/>
            <person name="Romine M.F."/>
            <person name="Culley D.E."/>
            <person name="Serres M."/>
            <person name="Chertkov O."/>
            <person name="Brettin T."/>
            <person name="Bruce D."/>
            <person name="Han C."/>
            <person name="Tapia R."/>
            <person name="Gilna P."/>
            <person name="Schmutz J."/>
            <person name="Larimer F."/>
            <person name="Land M."/>
            <person name="Hauser L."/>
            <person name="Kyrpides N."/>
            <person name="Mikhailova N."/>
            <person name="Richardson P."/>
        </authorList>
    </citation>
    <scope>NUCLEOTIDE SEQUENCE [LARGE SCALE GENOMIC DNA]</scope>
    <source>
        <strain>NCIMB 400</strain>
    </source>
</reference>
<protein>
    <recommendedName>
        <fullName evidence="1">Putative pterin-4-alpha-carbinolamine dehydratase</fullName>
        <shortName evidence="1">PHS</shortName>
        <ecNumber evidence="1">4.2.1.96</ecNumber>
    </recommendedName>
    <alternativeName>
        <fullName evidence="1">4-alpha-hydroxy-tetrahydropterin dehydratase</fullName>
    </alternativeName>
    <alternativeName>
        <fullName evidence="1">Pterin carbinolamine dehydratase</fullName>
        <shortName evidence="1">PCD</shortName>
    </alternativeName>
</protein>
<keyword id="KW-0456">Lyase</keyword>
<keyword id="KW-1185">Reference proteome</keyword>
<dbReference type="EC" id="4.2.1.96" evidence="1"/>
<dbReference type="EMBL" id="CP000447">
    <property type="protein sequence ID" value="ABI71182.1"/>
    <property type="molecule type" value="Genomic_DNA"/>
</dbReference>
<dbReference type="RefSeq" id="WP_011636803.1">
    <property type="nucleotide sequence ID" value="NC_008345.1"/>
</dbReference>
<dbReference type="SMR" id="Q084Y3"/>
<dbReference type="STRING" id="318167.Sfri_1329"/>
<dbReference type="KEGG" id="sfr:Sfri_1329"/>
<dbReference type="eggNOG" id="COG2154">
    <property type="taxonomic scope" value="Bacteria"/>
</dbReference>
<dbReference type="HOGENOM" id="CLU_081974_2_2_6"/>
<dbReference type="OrthoDB" id="5294615at2"/>
<dbReference type="Proteomes" id="UP000000684">
    <property type="component" value="Chromosome"/>
</dbReference>
<dbReference type="GO" id="GO:0008124">
    <property type="term" value="F:4-alpha-hydroxytetrahydrobiopterin dehydratase activity"/>
    <property type="evidence" value="ECO:0007669"/>
    <property type="project" value="UniProtKB-UniRule"/>
</dbReference>
<dbReference type="GO" id="GO:0006729">
    <property type="term" value="P:tetrahydrobiopterin biosynthetic process"/>
    <property type="evidence" value="ECO:0007669"/>
    <property type="project" value="InterPro"/>
</dbReference>
<dbReference type="CDD" id="cd00913">
    <property type="entry name" value="PCD_DCoH_subfamily_a"/>
    <property type="match status" value="1"/>
</dbReference>
<dbReference type="Gene3D" id="3.30.1360.20">
    <property type="entry name" value="Transcriptional coactivator/pterin dehydratase"/>
    <property type="match status" value="1"/>
</dbReference>
<dbReference type="HAMAP" id="MF_00434">
    <property type="entry name" value="Pterin_4_alpha"/>
    <property type="match status" value="1"/>
</dbReference>
<dbReference type="InterPro" id="IPR036428">
    <property type="entry name" value="PCD_sf"/>
</dbReference>
<dbReference type="InterPro" id="IPR050376">
    <property type="entry name" value="Pterin-4-alpha-carb_dehyd"/>
</dbReference>
<dbReference type="InterPro" id="IPR001533">
    <property type="entry name" value="Pterin_deHydtase"/>
</dbReference>
<dbReference type="NCBIfam" id="NF002016">
    <property type="entry name" value="PRK00823.1-1"/>
    <property type="match status" value="1"/>
</dbReference>
<dbReference type="PANTHER" id="PTHR42805">
    <property type="entry name" value="PTERIN-4-ALPHA-CARBINOLAMINE DEHYDRATASE-RELATED"/>
    <property type="match status" value="1"/>
</dbReference>
<dbReference type="PANTHER" id="PTHR42805:SF1">
    <property type="entry name" value="PTERIN-4-ALPHA-CARBINOLAMINE DEHYDRATASE-RELATED"/>
    <property type="match status" value="1"/>
</dbReference>
<dbReference type="Pfam" id="PF01329">
    <property type="entry name" value="Pterin_4a"/>
    <property type="match status" value="1"/>
</dbReference>
<dbReference type="SUPFAM" id="SSF55248">
    <property type="entry name" value="PCD-like"/>
    <property type="match status" value="1"/>
</dbReference>